<reference key="1">
    <citation type="submission" date="2006-08" db="EMBL/GenBank/DDBJ databases">
        <title>Complete sequence of Shewanella frigidimarina NCIMB 400.</title>
        <authorList>
            <consortium name="US DOE Joint Genome Institute"/>
            <person name="Copeland A."/>
            <person name="Lucas S."/>
            <person name="Lapidus A."/>
            <person name="Barry K."/>
            <person name="Detter J.C."/>
            <person name="Glavina del Rio T."/>
            <person name="Hammon N."/>
            <person name="Israni S."/>
            <person name="Dalin E."/>
            <person name="Tice H."/>
            <person name="Pitluck S."/>
            <person name="Fredrickson J.K."/>
            <person name="Kolker E."/>
            <person name="McCuel L.A."/>
            <person name="DiChristina T."/>
            <person name="Nealson K.H."/>
            <person name="Newman D."/>
            <person name="Tiedje J.M."/>
            <person name="Zhou J."/>
            <person name="Romine M.F."/>
            <person name="Culley D.E."/>
            <person name="Serres M."/>
            <person name="Chertkov O."/>
            <person name="Brettin T."/>
            <person name="Bruce D."/>
            <person name="Han C."/>
            <person name="Tapia R."/>
            <person name="Gilna P."/>
            <person name="Schmutz J."/>
            <person name="Larimer F."/>
            <person name="Land M."/>
            <person name="Hauser L."/>
            <person name="Kyrpides N."/>
            <person name="Mikhailova N."/>
            <person name="Richardson P."/>
        </authorList>
    </citation>
    <scope>NUCLEOTIDE SEQUENCE [LARGE SCALE GENOMIC DNA]</scope>
    <source>
        <strain>NCIMB 400</strain>
    </source>
</reference>
<accession>Q089N1</accession>
<organism>
    <name type="scientific">Shewanella frigidimarina (strain NCIMB 400)</name>
    <dbReference type="NCBI Taxonomy" id="318167"/>
    <lineage>
        <taxon>Bacteria</taxon>
        <taxon>Pseudomonadati</taxon>
        <taxon>Pseudomonadota</taxon>
        <taxon>Gammaproteobacteria</taxon>
        <taxon>Alteromonadales</taxon>
        <taxon>Shewanellaceae</taxon>
        <taxon>Shewanella</taxon>
    </lineage>
</organism>
<feature type="chain" id="PRO_0000294850" description="Small ribosomal subunit protein uS11">
    <location>
        <begin position="1"/>
        <end position="130"/>
    </location>
</feature>
<keyword id="KW-1185">Reference proteome</keyword>
<keyword id="KW-0687">Ribonucleoprotein</keyword>
<keyword id="KW-0689">Ribosomal protein</keyword>
<keyword id="KW-0694">RNA-binding</keyword>
<keyword id="KW-0699">rRNA-binding</keyword>
<protein>
    <recommendedName>
        <fullName evidence="1">Small ribosomal subunit protein uS11</fullName>
    </recommendedName>
    <alternativeName>
        <fullName evidence="2">30S ribosomal protein S11</fullName>
    </alternativeName>
</protein>
<dbReference type="EMBL" id="CP000447">
    <property type="protein sequence ID" value="ABI70034.1"/>
    <property type="molecule type" value="Genomic_DNA"/>
</dbReference>
<dbReference type="RefSeq" id="WP_011635661.1">
    <property type="nucleotide sequence ID" value="NC_008345.1"/>
</dbReference>
<dbReference type="SMR" id="Q089N1"/>
<dbReference type="STRING" id="318167.Sfri_0171"/>
<dbReference type="GeneID" id="90572184"/>
<dbReference type="KEGG" id="sfr:Sfri_0171"/>
<dbReference type="eggNOG" id="COG0100">
    <property type="taxonomic scope" value="Bacteria"/>
</dbReference>
<dbReference type="HOGENOM" id="CLU_072439_5_0_6"/>
<dbReference type="OrthoDB" id="9806415at2"/>
<dbReference type="Proteomes" id="UP000000684">
    <property type="component" value="Chromosome"/>
</dbReference>
<dbReference type="GO" id="GO:1990904">
    <property type="term" value="C:ribonucleoprotein complex"/>
    <property type="evidence" value="ECO:0007669"/>
    <property type="project" value="UniProtKB-KW"/>
</dbReference>
<dbReference type="GO" id="GO:0005840">
    <property type="term" value="C:ribosome"/>
    <property type="evidence" value="ECO:0007669"/>
    <property type="project" value="UniProtKB-KW"/>
</dbReference>
<dbReference type="GO" id="GO:0019843">
    <property type="term" value="F:rRNA binding"/>
    <property type="evidence" value="ECO:0007669"/>
    <property type="project" value="UniProtKB-UniRule"/>
</dbReference>
<dbReference type="GO" id="GO:0003735">
    <property type="term" value="F:structural constituent of ribosome"/>
    <property type="evidence" value="ECO:0007669"/>
    <property type="project" value="InterPro"/>
</dbReference>
<dbReference type="GO" id="GO:0006412">
    <property type="term" value="P:translation"/>
    <property type="evidence" value="ECO:0007669"/>
    <property type="project" value="UniProtKB-UniRule"/>
</dbReference>
<dbReference type="FunFam" id="3.30.420.80:FF:000001">
    <property type="entry name" value="30S ribosomal protein S11"/>
    <property type="match status" value="1"/>
</dbReference>
<dbReference type="Gene3D" id="3.30.420.80">
    <property type="entry name" value="Ribosomal protein S11"/>
    <property type="match status" value="1"/>
</dbReference>
<dbReference type="HAMAP" id="MF_01310">
    <property type="entry name" value="Ribosomal_uS11"/>
    <property type="match status" value="1"/>
</dbReference>
<dbReference type="InterPro" id="IPR001971">
    <property type="entry name" value="Ribosomal_uS11"/>
</dbReference>
<dbReference type="InterPro" id="IPR019981">
    <property type="entry name" value="Ribosomal_uS11_bac-type"/>
</dbReference>
<dbReference type="InterPro" id="IPR018102">
    <property type="entry name" value="Ribosomal_uS11_CS"/>
</dbReference>
<dbReference type="InterPro" id="IPR036967">
    <property type="entry name" value="Ribosomal_uS11_sf"/>
</dbReference>
<dbReference type="NCBIfam" id="NF003698">
    <property type="entry name" value="PRK05309.1"/>
    <property type="match status" value="1"/>
</dbReference>
<dbReference type="NCBIfam" id="TIGR03632">
    <property type="entry name" value="uS11_bact"/>
    <property type="match status" value="1"/>
</dbReference>
<dbReference type="PANTHER" id="PTHR11759">
    <property type="entry name" value="40S RIBOSOMAL PROTEIN S14/30S RIBOSOMAL PROTEIN S11"/>
    <property type="match status" value="1"/>
</dbReference>
<dbReference type="Pfam" id="PF00411">
    <property type="entry name" value="Ribosomal_S11"/>
    <property type="match status" value="1"/>
</dbReference>
<dbReference type="PIRSF" id="PIRSF002131">
    <property type="entry name" value="Ribosomal_S11"/>
    <property type="match status" value="1"/>
</dbReference>
<dbReference type="SUPFAM" id="SSF53137">
    <property type="entry name" value="Translational machinery components"/>
    <property type="match status" value="1"/>
</dbReference>
<dbReference type="PROSITE" id="PS00054">
    <property type="entry name" value="RIBOSOMAL_S11"/>
    <property type="match status" value="1"/>
</dbReference>
<evidence type="ECO:0000255" key="1">
    <source>
        <dbReference type="HAMAP-Rule" id="MF_01310"/>
    </source>
</evidence>
<evidence type="ECO:0000305" key="2"/>
<comment type="function">
    <text evidence="1">Located on the platform of the 30S subunit, it bridges several disparate RNA helices of the 16S rRNA. Forms part of the Shine-Dalgarno cleft in the 70S ribosome.</text>
</comment>
<comment type="subunit">
    <text evidence="1">Part of the 30S ribosomal subunit. Interacts with proteins S7 and S18. Binds to IF-3.</text>
</comment>
<comment type="similarity">
    <text evidence="1">Belongs to the universal ribosomal protein uS11 family.</text>
</comment>
<name>RS11_SHEFN</name>
<gene>
    <name evidence="1" type="primary">rpsK</name>
    <name type="ordered locus">Sfri_0171</name>
</gene>
<proteinExistence type="inferred from homology"/>
<sequence length="130" mass="13920">MAKVPSRSPRKRVRKQVADGMAHIHASFNNTIVTITDRQGNALSWATSGGSGFRGSRKSTPFAAQVAAERAGIAAQDYGVKNLEVFVKGPGPGRESAIRALNAVGYKITNITDVTPIPHNGCRPPKKRRV</sequence>